<dbReference type="EMBL" id="AACD01000022">
    <property type="protein sequence ID" value="EAA64550.1"/>
    <property type="molecule type" value="Genomic_DNA"/>
</dbReference>
<dbReference type="EMBL" id="BN001307">
    <property type="protein sequence ID" value="CBF84823.1"/>
    <property type="molecule type" value="Genomic_DNA"/>
</dbReference>
<dbReference type="RefSeq" id="XP_659024.1">
    <property type="nucleotide sequence ID" value="XM_653932.1"/>
</dbReference>
<dbReference type="SMR" id="Q5BDG0"/>
<dbReference type="FunCoup" id="Q5BDG0">
    <property type="interactions" value="42"/>
</dbReference>
<dbReference type="STRING" id="227321.Q5BDG0"/>
<dbReference type="EnsemblFungi" id="CBF84823">
    <property type="protein sequence ID" value="CBF84823"/>
    <property type="gene ID" value="ANIA_01420"/>
</dbReference>
<dbReference type="KEGG" id="ani:ANIA_01420"/>
<dbReference type="VEuPathDB" id="FungiDB:AN1420"/>
<dbReference type="eggNOG" id="KOG2789">
    <property type="taxonomic scope" value="Eukaryota"/>
</dbReference>
<dbReference type="HOGENOM" id="CLU_009068_1_0_1"/>
<dbReference type="InParanoid" id="Q5BDG0"/>
<dbReference type="OMA" id="CFLTYPP"/>
<dbReference type="OrthoDB" id="21471at2759"/>
<dbReference type="Proteomes" id="UP000000560">
    <property type="component" value="Chromosome VII"/>
</dbReference>
<dbReference type="GO" id="GO:0005737">
    <property type="term" value="C:cytoplasm"/>
    <property type="evidence" value="ECO:0007669"/>
    <property type="project" value="UniProtKB-SubCell"/>
</dbReference>
<dbReference type="CDD" id="cd24139">
    <property type="entry name" value="SIP5-like"/>
    <property type="match status" value="1"/>
</dbReference>
<dbReference type="InterPro" id="IPR039301">
    <property type="entry name" value="Sip5/DA2"/>
</dbReference>
<dbReference type="PANTHER" id="PTHR31315">
    <property type="entry name" value="PROTEIN SIP5"/>
    <property type="match status" value="1"/>
</dbReference>
<dbReference type="PANTHER" id="PTHR31315:SF1">
    <property type="entry name" value="PROTEIN SIP5"/>
    <property type="match status" value="1"/>
</dbReference>
<protein>
    <recommendedName>
        <fullName>Protein sip5</fullName>
    </recommendedName>
</protein>
<comment type="function">
    <text evidence="1">May negatively regulate the snf1 kinase.</text>
</comment>
<comment type="subcellular location">
    <subcellularLocation>
        <location evidence="1">Cytoplasm</location>
    </subcellularLocation>
</comment>
<comment type="similarity">
    <text evidence="3">Belongs to the SIP5 family.</text>
</comment>
<proteinExistence type="inferred from homology"/>
<name>SIP5_EMENI</name>
<gene>
    <name type="primary">sip5</name>
    <name type="ORF">AN1420</name>
</gene>
<feature type="chain" id="PRO_0000333436" description="Protein sip5">
    <location>
        <begin position="1"/>
        <end position="821"/>
    </location>
</feature>
<feature type="region of interest" description="Disordered" evidence="2">
    <location>
        <begin position="1"/>
        <end position="61"/>
    </location>
</feature>
<feature type="region of interest" description="Disordered" evidence="2">
    <location>
        <begin position="205"/>
        <end position="272"/>
    </location>
</feature>
<feature type="region of interest" description="Disordered" evidence="2">
    <location>
        <begin position="323"/>
        <end position="347"/>
    </location>
</feature>
<feature type="region of interest" description="Disordered" evidence="2">
    <location>
        <begin position="384"/>
        <end position="422"/>
    </location>
</feature>
<feature type="region of interest" description="Disordered" evidence="2">
    <location>
        <begin position="466"/>
        <end position="502"/>
    </location>
</feature>
<feature type="region of interest" description="Disordered" evidence="2">
    <location>
        <begin position="514"/>
        <end position="541"/>
    </location>
</feature>
<feature type="region of interest" description="Disordered" evidence="2">
    <location>
        <begin position="562"/>
        <end position="726"/>
    </location>
</feature>
<feature type="region of interest" description="Disordered" evidence="2">
    <location>
        <begin position="739"/>
        <end position="821"/>
    </location>
</feature>
<feature type="compositionally biased region" description="Low complexity" evidence="2">
    <location>
        <begin position="22"/>
        <end position="32"/>
    </location>
</feature>
<feature type="compositionally biased region" description="Basic and acidic residues" evidence="2">
    <location>
        <begin position="34"/>
        <end position="44"/>
    </location>
</feature>
<feature type="compositionally biased region" description="Polar residues" evidence="2">
    <location>
        <begin position="205"/>
        <end position="220"/>
    </location>
</feature>
<feature type="compositionally biased region" description="Low complexity" evidence="2">
    <location>
        <begin position="224"/>
        <end position="238"/>
    </location>
</feature>
<feature type="compositionally biased region" description="Polar residues" evidence="2">
    <location>
        <begin position="248"/>
        <end position="265"/>
    </location>
</feature>
<feature type="compositionally biased region" description="Basic and acidic residues" evidence="2">
    <location>
        <begin position="323"/>
        <end position="332"/>
    </location>
</feature>
<feature type="compositionally biased region" description="Low complexity" evidence="2">
    <location>
        <begin position="395"/>
        <end position="411"/>
    </location>
</feature>
<feature type="compositionally biased region" description="Low complexity" evidence="2">
    <location>
        <begin position="478"/>
        <end position="489"/>
    </location>
</feature>
<feature type="compositionally biased region" description="Polar residues" evidence="2">
    <location>
        <begin position="518"/>
        <end position="531"/>
    </location>
</feature>
<feature type="compositionally biased region" description="Basic and acidic residues" evidence="2">
    <location>
        <begin position="562"/>
        <end position="591"/>
    </location>
</feature>
<feature type="compositionally biased region" description="Low complexity" evidence="2">
    <location>
        <begin position="598"/>
        <end position="612"/>
    </location>
</feature>
<feature type="compositionally biased region" description="Basic and acidic residues" evidence="2">
    <location>
        <begin position="626"/>
        <end position="639"/>
    </location>
</feature>
<feature type="compositionally biased region" description="Polar residues" evidence="2">
    <location>
        <begin position="642"/>
        <end position="659"/>
    </location>
</feature>
<feature type="compositionally biased region" description="Low complexity" evidence="2">
    <location>
        <begin position="660"/>
        <end position="676"/>
    </location>
</feature>
<feature type="compositionally biased region" description="Low complexity" evidence="2">
    <location>
        <begin position="693"/>
        <end position="709"/>
    </location>
</feature>
<feature type="compositionally biased region" description="Basic and acidic residues" evidence="2">
    <location>
        <begin position="744"/>
        <end position="754"/>
    </location>
</feature>
<feature type="compositionally biased region" description="Polar residues" evidence="2">
    <location>
        <begin position="755"/>
        <end position="771"/>
    </location>
</feature>
<feature type="compositionally biased region" description="Basic and acidic residues" evidence="2">
    <location>
        <begin position="800"/>
        <end position="821"/>
    </location>
</feature>
<reference key="1">
    <citation type="journal article" date="2005" name="Nature">
        <title>Sequencing of Aspergillus nidulans and comparative analysis with A. fumigatus and A. oryzae.</title>
        <authorList>
            <person name="Galagan J.E."/>
            <person name="Calvo S.E."/>
            <person name="Cuomo C."/>
            <person name="Ma L.-J."/>
            <person name="Wortman J.R."/>
            <person name="Batzoglou S."/>
            <person name="Lee S.-I."/>
            <person name="Bastuerkmen M."/>
            <person name="Spevak C.C."/>
            <person name="Clutterbuck J."/>
            <person name="Kapitonov V."/>
            <person name="Jurka J."/>
            <person name="Scazzocchio C."/>
            <person name="Farman M.L."/>
            <person name="Butler J."/>
            <person name="Purcell S."/>
            <person name="Harris S."/>
            <person name="Braus G.H."/>
            <person name="Draht O."/>
            <person name="Busch S."/>
            <person name="D'Enfert C."/>
            <person name="Bouchier C."/>
            <person name="Goldman G.H."/>
            <person name="Bell-Pedersen D."/>
            <person name="Griffiths-Jones S."/>
            <person name="Doonan J.H."/>
            <person name="Yu J."/>
            <person name="Vienken K."/>
            <person name="Pain A."/>
            <person name="Freitag M."/>
            <person name="Selker E.U."/>
            <person name="Archer D.B."/>
            <person name="Penalva M.A."/>
            <person name="Oakley B.R."/>
            <person name="Momany M."/>
            <person name="Tanaka T."/>
            <person name="Kumagai T."/>
            <person name="Asai K."/>
            <person name="Machida M."/>
            <person name="Nierman W.C."/>
            <person name="Denning D.W."/>
            <person name="Caddick M.X."/>
            <person name="Hynes M."/>
            <person name="Paoletti M."/>
            <person name="Fischer R."/>
            <person name="Miller B.L."/>
            <person name="Dyer P.S."/>
            <person name="Sachs M.S."/>
            <person name="Osmani S.A."/>
            <person name="Birren B.W."/>
        </authorList>
    </citation>
    <scope>NUCLEOTIDE SEQUENCE [LARGE SCALE GENOMIC DNA]</scope>
    <source>
        <strain>FGSC A4 / ATCC 38163 / CBS 112.46 / NRRL 194 / M139</strain>
    </source>
</reference>
<reference key="2">
    <citation type="journal article" date="2009" name="Fungal Genet. Biol.">
        <title>The 2008 update of the Aspergillus nidulans genome annotation: a community effort.</title>
        <authorList>
            <person name="Wortman J.R."/>
            <person name="Gilsenan J.M."/>
            <person name="Joardar V."/>
            <person name="Deegan J."/>
            <person name="Clutterbuck J."/>
            <person name="Andersen M.R."/>
            <person name="Archer D."/>
            <person name="Bencina M."/>
            <person name="Braus G."/>
            <person name="Coutinho P."/>
            <person name="von Dohren H."/>
            <person name="Doonan J."/>
            <person name="Driessen A.J."/>
            <person name="Durek P."/>
            <person name="Espeso E."/>
            <person name="Fekete E."/>
            <person name="Flipphi M."/>
            <person name="Estrada C.G."/>
            <person name="Geysens S."/>
            <person name="Goldman G."/>
            <person name="de Groot P.W."/>
            <person name="Hansen K."/>
            <person name="Harris S.D."/>
            <person name="Heinekamp T."/>
            <person name="Helmstaedt K."/>
            <person name="Henrissat B."/>
            <person name="Hofmann G."/>
            <person name="Homan T."/>
            <person name="Horio T."/>
            <person name="Horiuchi H."/>
            <person name="James S."/>
            <person name="Jones M."/>
            <person name="Karaffa L."/>
            <person name="Karanyi Z."/>
            <person name="Kato M."/>
            <person name="Keller N."/>
            <person name="Kelly D.E."/>
            <person name="Kiel J.A."/>
            <person name="Kim J.M."/>
            <person name="van der Klei I.J."/>
            <person name="Klis F.M."/>
            <person name="Kovalchuk A."/>
            <person name="Krasevec N."/>
            <person name="Kubicek C.P."/>
            <person name="Liu B."/>
            <person name="Maccabe A."/>
            <person name="Meyer V."/>
            <person name="Mirabito P."/>
            <person name="Miskei M."/>
            <person name="Mos M."/>
            <person name="Mullins J."/>
            <person name="Nelson D.R."/>
            <person name="Nielsen J."/>
            <person name="Oakley B.R."/>
            <person name="Osmani S.A."/>
            <person name="Pakula T."/>
            <person name="Paszewski A."/>
            <person name="Paulsen I."/>
            <person name="Pilsyk S."/>
            <person name="Pocsi I."/>
            <person name="Punt P.J."/>
            <person name="Ram A.F."/>
            <person name="Ren Q."/>
            <person name="Robellet X."/>
            <person name="Robson G."/>
            <person name="Seiboth B."/>
            <person name="van Solingen P."/>
            <person name="Specht T."/>
            <person name="Sun J."/>
            <person name="Taheri-Talesh N."/>
            <person name="Takeshita N."/>
            <person name="Ussery D."/>
            <person name="vanKuyk P.A."/>
            <person name="Visser H."/>
            <person name="van de Vondervoort P.J."/>
            <person name="de Vries R.P."/>
            <person name="Walton J."/>
            <person name="Xiang X."/>
            <person name="Xiong Y."/>
            <person name="Zeng A.P."/>
            <person name="Brandt B.W."/>
            <person name="Cornell M.J."/>
            <person name="van den Hondel C.A."/>
            <person name="Visser J."/>
            <person name="Oliver S.G."/>
            <person name="Turner G."/>
        </authorList>
    </citation>
    <scope>GENOME REANNOTATION</scope>
    <source>
        <strain>FGSC A4 / ATCC 38163 / CBS 112.46 / NRRL 194 / M139</strain>
    </source>
</reference>
<sequence>MGNSQTKETRPSHSQSSRRSHQWGSGSSHGRSPYGDRHNSEGSRSHRSSRPDLSILGLGGSSDRDVATILEHRRETKQEREARRLEKERAARIKERERSMREEHVDGGYLVTQGVYTGTEDFNKAIVRQLMIERRLAPFWRGLNDFSDSWTEHQLMAAARGLPIPPPDEIPPELEYRNPPKVVEEAKEASNIQSVQHLMVPITSRSASNGSDVSHSSQPAHSLPSPSSPIASGTSSSPLFRSRAKTLASLTTSRHNSQVDSTPQEIQLPRDPFVNGQPIEAYLYKDAIECPICFLYYPPYLNRTRCCDQPICSECFVQIKRPDPHPPEHADSDSNAPNPAGETERQDVQDIQLVSEPAACPFCVQPEFGVAYVPPPFRRGLAYASDSSGRPNIGTPVSSTSSLSSATTPTTGRRRATSLSATDPSVITTDKVRPDWAQKLANARAHAARRSAAATALHTAAYLMNSNGSGGDTRGFSMRRGVMRRNNGGQDSPGTPGRSGSPALQAFAFLTDRRAPSGQETDSAEEGTSNLAPPRNSSRRSRMDDLEEMMMMEAIRLSLASEEERRKREEKELRKEAKRREKEAKKAEKMARKAGLYSNNASSSALESPSDSRLPKVTSSSSSIIGEERTPPGKGKAVERVTPSQSNVDLTETASSGDVPSSFLEPQQPQSSSSLGPPVPKEPSKPSHLRHVSSASSSFSSLVESMSEEPGLSAQPHEGTSSSAEPLFNFRSLAAVIGDEDKSDEAAEHVEDTAPHTTSEGSTSSAANLTTAPAGESAVSTSSTAVEKGPTVEESQECSVNKEIETRSMEVTDSRNSETTS</sequence>
<organism>
    <name type="scientific">Emericella nidulans (strain FGSC A4 / ATCC 38163 / CBS 112.46 / NRRL 194 / M139)</name>
    <name type="common">Aspergillus nidulans</name>
    <dbReference type="NCBI Taxonomy" id="227321"/>
    <lineage>
        <taxon>Eukaryota</taxon>
        <taxon>Fungi</taxon>
        <taxon>Dikarya</taxon>
        <taxon>Ascomycota</taxon>
        <taxon>Pezizomycotina</taxon>
        <taxon>Eurotiomycetes</taxon>
        <taxon>Eurotiomycetidae</taxon>
        <taxon>Eurotiales</taxon>
        <taxon>Aspergillaceae</taxon>
        <taxon>Aspergillus</taxon>
        <taxon>Aspergillus subgen. Nidulantes</taxon>
    </lineage>
</organism>
<keyword id="KW-0963">Cytoplasm</keyword>
<keyword id="KW-1185">Reference proteome</keyword>
<evidence type="ECO:0000250" key="1"/>
<evidence type="ECO:0000256" key="2">
    <source>
        <dbReference type="SAM" id="MobiDB-lite"/>
    </source>
</evidence>
<evidence type="ECO:0000305" key="3"/>
<accession>Q5BDG0</accession>
<accession>C8VM34</accession>